<feature type="signal peptide" evidence="6">
    <location>
        <begin position="1"/>
        <end position="24"/>
    </location>
</feature>
<feature type="propeptide" id="PRO_0000028610" description="Activation peptide" evidence="6">
    <location>
        <begin position="25"/>
        <end position="245"/>
    </location>
</feature>
<feature type="chain" id="PRO_0000028611" description="Bacillolysin">
    <location>
        <begin position="246"/>
        <end position="562"/>
    </location>
</feature>
<feature type="active site" evidence="2">
    <location>
        <position position="389"/>
    </location>
</feature>
<feature type="active site" description="Proton donor" evidence="2">
    <location>
        <position position="477"/>
    </location>
</feature>
<feature type="binding site" evidence="2">
    <location>
        <position position="303"/>
    </location>
    <ligand>
        <name>Ca(2+)</name>
        <dbReference type="ChEBI" id="CHEBI:29108"/>
        <label>1</label>
    </ligand>
</feature>
<feature type="binding site" evidence="2">
    <location>
        <position position="305"/>
    </location>
    <ligand>
        <name>Ca(2+)</name>
        <dbReference type="ChEBI" id="CHEBI:29108"/>
        <label>1</label>
    </ligand>
</feature>
<feature type="binding site" evidence="2">
    <location>
        <position position="384"/>
    </location>
    <ligand>
        <name>Ca(2+)</name>
        <dbReference type="ChEBI" id="CHEBI:29108"/>
        <label>2</label>
    </ligand>
</feature>
<feature type="binding site" evidence="2">
    <location>
        <position position="388"/>
    </location>
    <ligand>
        <name>Zn(2+)</name>
        <dbReference type="ChEBI" id="CHEBI:29105"/>
        <note>catalytic</note>
    </ligand>
</feature>
<feature type="binding site" evidence="2">
    <location>
        <position position="392"/>
    </location>
    <ligand>
        <name>Zn(2+)</name>
        <dbReference type="ChEBI" id="CHEBI:29105"/>
        <note>catalytic</note>
    </ligand>
</feature>
<feature type="binding site" evidence="2">
    <location>
        <position position="412"/>
    </location>
    <ligand>
        <name>Zn(2+)</name>
        <dbReference type="ChEBI" id="CHEBI:29105"/>
        <note>catalytic</note>
    </ligand>
</feature>
<feature type="binding site" evidence="2">
    <location>
        <position position="423"/>
    </location>
    <ligand>
        <name>Ca(2+)</name>
        <dbReference type="ChEBI" id="CHEBI:29108"/>
        <label>2</label>
    </ligand>
</feature>
<feature type="binding site" evidence="2">
    <location>
        <position position="423"/>
    </location>
    <ligand>
        <name>Ca(2+)</name>
        <dbReference type="ChEBI" id="CHEBI:29108"/>
        <label>3</label>
    </ligand>
</feature>
<feature type="binding site" evidence="2">
    <location>
        <position position="429"/>
    </location>
    <ligand>
        <name>Ca(2+)</name>
        <dbReference type="ChEBI" id="CHEBI:29108"/>
        <label>3</label>
    </ligand>
</feature>
<feature type="binding site" evidence="2">
    <location>
        <position position="431"/>
    </location>
    <ligand>
        <name>Ca(2+)</name>
        <dbReference type="ChEBI" id="CHEBI:29108"/>
        <label>2</label>
    </ligand>
</feature>
<feature type="binding site" evidence="2">
    <location>
        <position position="431"/>
    </location>
    <ligand>
        <name>Ca(2+)</name>
        <dbReference type="ChEBI" id="CHEBI:29108"/>
        <label>3</label>
    </ligand>
</feature>
<feature type="binding site" evidence="2">
    <location>
        <position position="433"/>
    </location>
    <ligand>
        <name>Ca(2+)</name>
        <dbReference type="ChEBI" id="CHEBI:29108"/>
        <label>2</label>
    </ligand>
</feature>
<feature type="binding site" evidence="2">
    <location>
        <position position="436"/>
    </location>
    <ligand>
        <name>Ca(2+)</name>
        <dbReference type="ChEBI" id="CHEBI:29108"/>
        <label>2</label>
    </ligand>
</feature>
<feature type="binding site" evidence="2">
    <location>
        <position position="436"/>
    </location>
    <ligand>
        <name>Ca(2+)</name>
        <dbReference type="ChEBI" id="CHEBI:29108"/>
        <label>3</label>
    </ligand>
</feature>
<feature type="binding site" evidence="2">
    <location>
        <position position="439"/>
    </location>
    <ligand>
        <name>Ca(2+)</name>
        <dbReference type="ChEBI" id="CHEBI:29108"/>
        <label>4</label>
    </ligand>
</feature>
<feature type="binding site" evidence="2">
    <location>
        <position position="440"/>
    </location>
    <ligand>
        <name>Ca(2+)</name>
        <dbReference type="ChEBI" id="CHEBI:29108"/>
        <label>4</label>
    </ligand>
</feature>
<feature type="binding site" evidence="2">
    <location>
        <position position="446"/>
    </location>
    <ligand>
        <name>Ca(2+)</name>
        <dbReference type="ChEBI" id="CHEBI:29108"/>
        <label>4</label>
    </ligand>
</feature>
<name>NPRM_PRIM2</name>
<reference key="1">
    <citation type="journal article" date="1993" name="J. Gen. Microbiol.">
        <title>Molecular cloning and nucleotide sequence of the gene encoding a calcium-dependent exoproteinase from Bacillus megaterium ATCC 14581.</title>
        <authorList>
            <person name="Kuhn S."/>
            <person name="Fortnagel P."/>
        </authorList>
    </citation>
    <scope>NUCLEOTIDE SEQUENCE [GENOMIC DNA]</scope>
    <scope>FUNCTION</scope>
    <scope>BIOPHYSICOCHEMICAL PROPERTIES</scope>
    <scope>COFACTOR</scope>
    <scope>SUBCELLULAR LOCATION</scope>
    <source>
        <strain>ATCC 14581 / DSM 32 / CCUG 1817 / JCM 2506 / NBRC 15308 / NCIMB 9376 / NCTC 10342 / NRRL B-14308 / VKM B-512 / Ford 19</strain>
    </source>
</reference>
<accession>P0CH29</accession>
<accession>Q00891</accession>
<proteinExistence type="evidence at protein level"/>
<comment type="function">
    <text evidence="3">Extracellular zinc metalloprotease.</text>
</comment>
<comment type="catalytic activity">
    <reaction>
        <text>Similar, but not identical, to that of thermolysin.</text>
        <dbReference type="EC" id="3.4.24.28"/>
    </reaction>
</comment>
<comment type="cofactor">
    <cofactor evidence="3">
        <name>Ca(2+)</name>
        <dbReference type="ChEBI" id="CHEBI:29108"/>
    </cofactor>
    <text evidence="1">Binds 4 Ca(2+) ions per subunit.</text>
</comment>
<comment type="cofactor">
    <cofactor evidence="1">
        <name>Zn(2+)</name>
        <dbReference type="ChEBI" id="CHEBI:29105"/>
    </cofactor>
    <text evidence="1">Binds 1 zinc ion per subunit.</text>
</comment>
<comment type="biophysicochemical properties">
    <phDependence>
        <text evidence="3">Optimum pH is between 6.4 and 7.2.</text>
    </phDependence>
    <temperatureDependence>
        <text evidence="3">Optimum temperature is 58 degrees Celsius.</text>
    </temperatureDependence>
</comment>
<comment type="subcellular location">
    <subcellularLocation>
        <location evidence="3">Secreted</location>
    </subcellularLocation>
</comment>
<comment type="similarity">
    <text evidence="5">Belongs to the peptidase M4 family.</text>
</comment>
<gene>
    <name evidence="4" type="primary">nprM</name>
</gene>
<organism>
    <name type="scientific">Priestia megaterium (strain ATCC 14581 / DSM 32 / CCUG 1817 / JCM 2506 / NBRC 15308 / NCIMB 9376 / NCTC 10342 / NRRL B-14308 / VKM B-512 / Ford 19)</name>
    <name type="common">Bacillus megaterium</name>
    <dbReference type="NCBI Taxonomy" id="1348623"/>
    <lineage>
        <taxon>Bacteria</taxon>
        <taxon>Bacillati</taxon>
        <taxon>Bacillota</taxon>
        <taxon>Bacilli</taxon>
        <taxon>Bacillales</taxon>
        <taxon>Bacillaceae</taxon>
        <taxon>Priestia</taxon>
    </lineage>
</organism>
<keyword id="KW-0106">Calcium</keyword>
<keyword id="KW-0378">Hydrolase</keyword>
<keyword id="KW-0479">Metal-binding</keyword>
<keyword id="KW-0482">Metalloprotease</keyword>
<keyword id="KW-0645">Protease</keyword>
<keyword id="KW-0964">Secreted</keyword>
<keyword id="KW-0732">Signal</keyword>
<keyword id="KW-0862">Zinc</keyword>
<keyword id="KW-0865">Zymogen</keyword>
<dbReference type="EC" id="3.4.24.28"/>
<dbReference type="EMBL" id="X61380">
    <property type="protein sequence ID" value="CAA43654.1"/>
    <property type="molecule type" value="Genomic_DNA"/>
</dbReference>
<dbReference type="PIR" id="A47710">
    <property type="entry name" value="A47710"/>
</dbReference>
<dbReference type="SMR" id="P0CH29"/>
<dbReference type="MEROPS" id="M04.001"/>
<dbReference type="GO" id="GO:0005576">
    <property type="term" value="C:extracellular region"/>
    <property type="evidence" value="ECO:0007669"/>
    <property type="project" value="UniProtKB-SubCell"/>
</dbReference>
<dbReference type="GO" id="GO:0046872">
    <property type="term" value="F:metal ion binding"/>
    <property type="evidence" value="ECO:0007669"/>
    <property type="project" value="UniProtKB-KW"/>
</dbReference>
<dbReference type="GO" id="GO:0004222">
    <property type="term" value="F:metalloendopeptidase activity"/>
    <property type="evidence" value="ECO:0007669"/>
    <property type="project" value="InterPro"/>
</dbReference>
<dbReference type="GO" id="GO:0006508">
    <property type="term" value="P:proteolysis"/>
    <property type="evidence" value="ECO:0007669"/>
    <property type="project" value="UniProtKB-KW"/>
</dbReference>
<dbReference type="CDD" id="cd09597">
    <property type="entry name" value="M4_TLP"/>
    <property type="match status" value="1"/>
</dbReference>
<dbReference type="FunFam" id="3.10.170.10:FF:000001">
    <property type="entry name" value="Peptidase M4"/>
    <property type="match status" value="1"/>
</dbReference>
<dbReference type="FunFam" id="1.10.390.10:FF:000012">
    <property type="entry name" value="Thermolysin"/>
    <property type="match status" value="1"/>
</dbReference>
<dbReference type="Gene3D" id="3.10.170.10">
    <property type="match status" value="1"/>
</dbReference>
<dbReference type="Gene3D" id="3.10.450.40">
    <property type="match status" value="1"/>
</dbReference>
<dbReference type="Gene3D" id="3.10.450.490">
    <property type="match status" value="1"/>
</dbReference>
<dbReference type="Gene3D" id="1.10.390.10">
    <property type="entry name" value="Neutral Protease Domain 2"/>
    <property type="match status" value="1"/>
</dbReference>
<dbReference type="InterPro" id="IPR011096">
    <property type="entry name" value="FTP_domain"/>
</dbReference>
<dbReference type="InterPro" id="IPR025711">
    <property type="entry name" value="PepSY"/>
</dbReference>
<dbReference type="InterPro" id="IPR023612">
    <property type="entry name" value="Peptidase_M4"/>
</dbReference>
<dbReference type="InterPro" id="IPR027268">
    <property type="entry name" value="Peptidase_M4/M1_CTD_sf"/>
</dbReference>
<dbReference type="InterPro" id="IPR001570">
    <property type="entry name" value="Peptidase_M4_C_domain"/>
</dbReference>
<dbReference type="InterPro" id="IPR013856">
    <property type="entry name" value="Peptidase_M4_domain"/>
</dbReference>
<dbReference type="InterPro" id="IPR050728">
    <property type="entry name" value="Zinc_Metalloprotease_M4"/>
</dbReference>
<dbReference type="PANTHER" id="PTHR33794">
    <property type="entry name" value="BACILLOLYSIN"/>
    <property type="match status" value="1"/>
</dbReference>
<dbReference type="PANTHER" id="PTHR33794:SF3">
    <property type="entry name" value="NEUTRAL PROTEASE B"/>
    <property type="match status" value="1"/>
</dbReference>
<dbReference type="Pfam" id="PF07504">
    <property type="entry name" value="FTP"/>
    <property type="match status" value="1"/>
</dbReference>
<dbReference type="Pfam" id="PF03413">
    <property type="entry name" value="PepSY"/>
    <property type="match status" value="1"/>
</dbReference>
<dbReference type="Pfam" id="PF01447">
    <property type="entry name" value="Peptidase_M4"/>
    <property type="match status" value="1"/>
</dbReference>
<dbReference type="Pfam" id="PF02868">
    <property type="entry name" value="Peptidase_M4_C"/>
    <property type="match status" value="1"/>
</dbReference>
<dbReference type="PRINTS" id="PR00730">
    <property type="entry name" value="THERMOLYSIN"/>
</dbReference>
<dbReference type="SUPFAM" id="SSF55486">
    <property type="entry name" value="Metalloproteases ('zincins'), catalytic domain"/>
    <property type="match status" value="1"/>
</dbReference>
<dbReference type="PROSITE" id="PS00142">
    <property type="entry name" value="ZINC_PROTEASE"/>
    <property type="match status" value="1"/>
</dbReference>
<evidence type="ECO:0000250" key="1"/>
<evidence type="ECO:0000250" key="2">
    <source>
        <dbReference type="UniProtKB" id="P05806"/>
    </source>
</evidence>
<evidence type="ECO:0000269" key="3">
    <source>
    </source>
</evidence>
<evidence type="ECO:0000303" key="4">
    <source>
    </source>
</evidence>
<evidence type="ECO:0000305" key="5"/>
<evidence type="ECO:0000305" key="6">
    <source>
    </source>
</evidence>
<sequence length="562" mass="60949">MKKKKQALKVLLSVGILSSSFAFAHTSSAAPNNVLSTEKYNKEIKSPEFISGKLSGPSSQKAQDVVFHYMNTNKDKYKLGNESAQNSFKVTEVVKDPVEQATVVRLQQVYNNIPVWGSTQLAHVAKDGTLKVVSGTVAPDLDKKEKLKGQKQVDSKKAIQAAEKDLGFKPTYEKSPSSELYVYQNASDTTYAYVVNLNFLSPEPGNYYYFVDAISGKVLDKYNTIDSVAGPKADVKQAAKPAAKPVTGTNTIGSGKGVLGDTKSLKTTLSSSTYYLQDNTRGATIYTYDAKNRTSLPGTLWADTDNTYNATRDAAAVDAHYYAGVTYDYYKNKFNRNSYDNAGRPLKSTVHYSSGYNNAFWNGSQMVYGDGDGTTFVPLSGGLDVIGHELTHALTERSSNLIYQYESGALNEAISDIFGTLVEYYDNRNPDWEIGEDIYTPGTSGDALRSMSNPAKYGDPDHYSKRYTGSSDNGGVHTNSGIINKAAYLLANGGTHYGVTVTGIGGDKLGKIYYRANTLYFTQSTTFSQARAGLVQAAADLYGSGSQEVISVGKSFDAVGVQ</sequence>
<protein>
    <recommendedName>
        <fullName>Bacillolysin</fullName>
        <ecNumber>3.4.24.28</ecNumber>
    </recommendedName>
    <alternativeName>
        <fullName evidence="4">Calcium-dependent exoproteinase</fullName>
    </alternativeName>
    <alternativeName>
        <fullName evidence="4">Neutral protease</fullName>
    </alternativeName>
</protein>